<sequence length="696" mass="75671">MPDLLLELRSEEIPARMQRRAAEDLKKLVTDALVERGFLYEGAKAFATPRRLALHVAGLPARGEAVREERRGPRVGAPEAAVQGFLKSAGLASLDQATTVTDPKKGEFYLAVIERPGRETLDVLAEILPGIIKSFPWPKSMRWGAASAQPGSLRWVRPLQSIVATFGPETETPEVVPFSVDGITAGMVTSGHRFLAPEPFEVRRFDDYVQALERADVILDADRRKDIILHDAKDLAFARGLDLVEDEGLLEEVAGLVERPVVLMGSFEERFLEIPAEAIRATIRANQKCFVLRKSGSDELAPAFVLVSNLIASDGGAAITAGNERVVRARLSDARFFWETDKATKLEDRLPKLDSIVFHEKLGTQGERVARIAALAAEIAPLVAADPALAERAARLAKADLVTEMVGEFPELQGLMGRKYAALQGEHDSVAAAIEEHYKPVGPSDRVPTDPVSIAVALADKLDTLVGFWAIDEKPTGSKDPYALRRAALGVIRAVIERSLRLSLASLLKGRFVSGSDERTADLLAFFADRLKVYLRDQGARHDLIDAVFALPGQDDLLMVVRRVEALGAFLATDDGKNLLAGYKRAANILRIEEKKDGRAYDEAPDAALAASGQPEERALAEALAAARQEASAAVAAEDFAGAMRALSRLRAPVDAFFEKVTVNADDPALRKNRLLLLNALRAATREVADFSRIEG</sequence>
<name>SYGB_METC4</name>
<keyword id="KW-0030">Aminoacyl-tRNA synthetase</keyword>
<keyword id="KW-0067">ATP-binding</keyword>
<keyword id="KW-0963">Cytoplasm</keyword>
<keyword id="KW-0436">Ligase</keyword>
<keyword id="KW-0547">Nucleotide-binding</keyword>
<keyword id="KW-0648">Protein biosynthesis</keyword>
<protein>
    <recommendedName>
        <fullName evidence="1">Glycine--tRNA ligase beta subunit</fullName>
        <ecNumber evidence="1">6.1.1.14</ecNumber>
    </recommendedName>
    <alternativeName>
        <fullName evidence="1">Glycyl-tRNA synthetase beta subunit</fullName>
        <shortName evidence="1">GlyRS</shortName>
    </alternativeName>
</protein>
<accession>B7KUK7</accession>
<comment type="catalytic activity">
    <reaction evidence="1">
        <text>tRNA(Gly) + glycine + ATP = glycyl-tRNA(Gly) + AMP + diphosphate</text>
        <dbReference type="Rhea" id="RHEA:16013"/>
        <dbReference type="Rhea" id="RHEA-COMP:9664"/>
        <dbReference type="Rhea" id="RHEA-COMP:9683"/>
        <dbReference type="ChEBI" id="CHEBI:30616"/>
        <dbReference type="ChEBI" id="CHEBI:33019"/>
        <dbReference type="ChEBI" id="CHEBI:57305"/>
        <dbReference type="ChEBI" id="CHEBI:78442"/>
        <dbReference type="ChEBI" id="CHEBI:78522"/>
        <dbReference type="ChEBI" id="CHEBI:456215"/>
        <dbReference type="EC" id="6.1.1.14"/>
    </reaction>
</comment>
<comment type="subunit">
    <text evidence="1">Tetramer of two alpha and two beta subunits.</text>
</comment>
<comment type="subcellular location">
    <subcellularLocation>
        <location evidence="1">Cytoplasm</location>
    </subcellularLocation>
</comment>
<comment type="similarity">
    <text evidence="1">Belongs to the class-II aminoacyl-tRNA synthetase family.</text>
</comment>
<organism>
    <name type="scientific">Methylorubrum extorquens (strain CM4 / NCIMB 13688)</name>
    <name type="common">Methylobacterium extorquens</name>
    <dbReference type="NCBI Taxonomy" id="440085"/>
    <lineage>
        <taxon>Bacteria</taxon>
        <taxon>Pseudomonadati</taxon>
        <taxon>Pseudomonadota</taxon>
        <taxon>Alphaproteobacteria</taxon>
        <taxon>Hyphomicrobiales</taxon>
        <taxon>Methylobacteriaceae</taxon>
        <taxon>Methylorubrum</taxon>
    </lineage>
</organism>
<dbReference type="EC" id="6.1.1.14" evidence="1"/>
<dbReference type="EMBL" id="CP001298">
    <property type="protein sequence ID" value="ACK84236.1"/>
    <property type="molecule type" value="Genomic_DNA"/>
</dbReference>
<dbReference type="RefSeq" id="WP_015951543.1">
    <property type="nucleotide sequence ID" value="NC_011757.1"/>
</dbReference>
<dbReference type="SMR" id="B7KUK7"/>
<dbReference type="KEGG" id="mch:Mchl_3416"/>
<dbReference type="HOGENOM" id="CLU_007220_2_1_5"/>
<dbReference type="Proteomes" id="UP000002385">
    <property type="component" value="Chromosome"/>
</dbReference>
<dbReference type="GO" id="GO:0005829">
    <property type="term" value="C:cytosol"/>
    <property type="evidence" value="ECO:0007669"/>
    <property type="project" value="TreeGrafter"/>
</dbReference>
<dbReference type="GO" id="GO:0004814">
    <property type="term" value="F:arginine-tRNA ligase activity"/>
    <property type="evidence" value="ECO:0007669"/>
    <property type="project" value="InterPro"/>
</dbReference>
<dbReference type="GO" id="GO:0005524">
    <property type="term" value="F:ATP binding"/>
    <property type="evidence" value="ECO:0007669"/>
    <property type="project" value="UniProtKB-UniRule"/>
</dbReference>
<dbReference type="GO" id="GO:0004820">
    <property type="term" value="F:glycine-tRNA ligase activity"/>
    <property type="evidence" value="ECO:0007669"/>
    <property type="project" value="UniProtKB-UniRule"/>
</dbReference>
<dbReference type="GO" id="GO:0006420">
    <property type="term" value="P:arginyl-tRNA aminoacylation"/>
    <property type="evidence" value="ECO:0007669"/>
    <property type="project" value="InterPro"/>
</dbReference>
<dbReference type="GO" id="GO:0006426">
    <property type="term" value="P:glycyl-tRNA aminoacylation"/>
    <property type="evidence" value="ECO:0007669"/>
    <property type="project" value="UniProtKB-UniRule"/>
</dbReference>
<dbReference type="Gene3D" id="1.10.730.10">
    <property type="entry name" value="Isoleucyl-tRNA Synthetase, Domain 1"/>
    <property type="match status" value="1"/>
</dbReference>
<dbReference type="HAMAP" id="MF_00255">
    <property type="entry name" value="Gly_tRNA_synth_beta"/>
    <property type="match status" value="1"/>
</dbReference>
<dbReference type="InterPro" id="IPR008909">
    <property type="entry name" value="DALR_anticod-bd"/>
</dbReference>
<dbReference type="InterPro" id="IPR015944">
    <property type="entry name" value="Gly-tRNA-synth_bsu"/>
</dbReference>
<dbReference type="InterPro" id="IPR006194">
    <property type="entry name" value="Gly-tRNA-synth_heterodimer"/>
</dbReference>
<dbReference type="NCBIfam" id="TIGR00211">
    <property type="entry name" value="glyS"/>
    <property type="match status" value="1"/>
</dbReference>
<dbReference type="PANTHER" id="PTHR30075:SF2">
    <property type="entry name" value="GLYCINE--TRNA LIGASE, CHLOROPLASTIC_MITOCHONDRIAL 2"/>
    <property type="match status" value="1"/>
</dbReference>
<dbReference type="PANTHER" id="PTHR30075">
    <property type="entry name" value="GLYCYL-TRNA SYNTHETASE"/>
    <property type="match status" value="1"/>
</dbReference>
<dbReference type="Pfam" id="PF05746">
    <property type="entry name" value="DALR_1"/>
    <property type="match status" value="1"/>
</dbReference>
<dbReference type="Pfam" id="PF02092">
    <property type="entry name" value="tRNA_synt_2f"/>
    <property type="match status" value="1"/>
</dbReference>
<dbReference type="PRINTS" id="PR01045">
    <property type="entry name" value="TRNASYNTHGB"/>
</dbReference>
<dbReference type="SUPFAM" id="SSF109604">
    <property type="entry name" value="HD-domain/PDEase-like"/>
    <property type="match status" value="1"/>
</dbReference>
<dbReference type="PROSITE" id="PS50861">
    <property type="entry name" value="AA_TRNA_LIGASE_II_GLYAB"/>
    <property type="match status" value="1"/>
</dbReference>
<evidence type="ECO:0000255" key="1">
    <source>
        <dbReference type="HAMAP-Rule" id="MF_00255"/>
    </source>
</evidence>
<proteinExistence type="inferred from homology"/>
<gene>
    <name evidence="1" type="primary">glyS</name>
    <name type="ordered locus">Mchl_3416</name>
</gene>
<reference key="1">
    <citation type="submission" date="2008-12" db="EMBL/GenBank/DDBJ databases">
        <title>Complete sequence of chromosome of Methylobacterium chloromethanicum CM4.</title>
        <authorList>
            <consortium name="US DOE Joint Genome Institute"/>
            <person name="Lucas S."/>
            <person name="Copeland A."/>
            <person name="Lapidus A."/>
            <person name="Glavina del Rio T."/>
            <person name="Dalin E."/>
            <person name="Tice H."/>
            <person name="Bruce D."/>
            <person name="Goodwin L."/>
            <person name="Pitluck S."/>
            <person name="Chertkov O."/>
            <person name="Brettin T."/>
            <person name="Detter J.C."/>
            <person name="Han C."/>
            <person name="Larimer F."/>
            <person name="Land M."/>
            <person name="Hauser L."/>
            <person name="Kyrpides N."/>
            <person name="Mikhailova N."/>
            <person name="Marx C."/>
            <person name="Richardson P."/>
        </authorList>
    </citation>
    <scope>NUCLEOTIDE SEQUENCE [LARGE SCALE GENOMIC DNA]</scope>
    <source>
        <strain>CM4 / NCIMB 13688</strain>
    </source>
</reference>
<feature type="chain" id="PRO_1000197207" description="Glycine--tRNA ligase beta subunit">
    <location>
        <begin position="1"/>
        <end position="696"/>
    </location>
</feature>